<proteinExistence type="inferred from homology"/>
<comment type="function">
    <text evidence="1">Heme-dependent dioxygenase that catalyzes the oxidative cleavage of the L-tryptophan (L-Trp) pyrrole ring and converts L-tryptophan to N-formyl-L-kynurenine. Catalyzes the oxidative cleavage of the indole moiety.</text>
</comment>
<comment type="catalytic activity">
    <reaction evidence="1">
        <text>L-tryptophan + O2 = N-formyl-L-kynurenine</text>
        <dbReference type="Rhea" id="RHEA:24536"/>
        <dbReference type="ChEBI" id="CHEBI:15379"/>
        <dbReference type="ChEBI" id="CHEBI:57912"/>
        <dbReference type="ChEBI" id="CHEBI:58629"/>
        <dbReference type="EC" id="1.13.11.11"/>
    </reaction>
</comment>
<comment type="cofactor">
    <cofactor evidence="1">
        <name>heme</name>
        <dbReference type="ChEBI" id="CHEBI:30413"/>
    </cofactor>
    <text evidence="1">Binds 1 heme group per subunit.</text>
</comment>
<comment type="pathway">
    <text evidence="1">Amino-acid degradation; L-tryptophan degradation via kynurenine pathway; L-kynurenine from L-tryptophan: step 1/2.</text>
</comment>
<comment type="subunit">
    <text evidence="1">Homotetramer.</text>
</comment>
<comment type="similarity">
    <text evidence="1">Belongs to the tryptophan 2,3-dioxygenase family.</text>
</comment>
<evidence type="ECO:0000255" key="1">
    <source>
        <dbReference type="HAMAP-Rule" id="MF_01972"/>
    </source>
</evidence>
<reference key="1">
    <citation type="journal article" date="2001" name="Proc. Natl. Acad. Sci. U.S.A.">
        <title>Complete genome sequence of Caulobacter crescentus.</title>
        <authorList>
            <person name="Nierman W.C."/>
            <person name="Feldblyum T.V."/>
            <person name="Laub M.T."/>
            <person name="Paulsen I.T."/>
            <person name="Nelson K.E."/>
            <person name="Eisen J.A."/>
            <person name="Heidelberg J.F."/>
            <person name="Alley M.R.K."/>
            <person name="Ohta N."/>
            <person name="Maddock J.R."/>
            <person name="Potocka I."/>
            <person name="Nelson W.C."/>
            <person name="Newton A."/>
            <person name="Stephens C."/>
            <person name="Phadke N.D."/>
            <person name="Ely B."/>
            <person name="DeBoy R.T."/>
            <person name="Dodson R.J."/>
            <person name="Durkin A.S."/>
            <person name="Gwinn M.L."/>
            <person name="Haft D.H."/>
            <person name="Kolonay J.F."/>
            <person name="Smit J."/>
            <person name="Craven M.B."/>
            <person name="Khouri H.M."/>
            <person name="Shetty J."/>
            <person name="Berry K.J."/>
            <person name="Utterback T.R."/>
            <person name="Tran K."/>
            <person name="Wolf A.M."/>
            <person name="Vamathevan J.J."/>
            <person name="Ermolaeva M.D."/>
            <person name="White O."/>
            <person name="Salzberg S.L."/>
            <person name="Venter J.C."/>
            <person name="Shapiro L."/>
            <person name="Fraser C.M."/>
        </authorList>
    </citation>
    <scope>NUCLEOTIDE SEQUENCE [LARGE SCALE GENOMIC DNA]</scope>
    <source>
        <strain>ATCC 19089 / CIP 103742 / CB 15</strain>
    </source>
</reference>
<dbReference type="EC" id="1.13.11.11" evidence="1"/>
<dbReference type="EMBL" id="AE005673">
    <property type="protein sequence ID" value="AAK24850.1"/>
    <property type="molecule type" value="Genomic_DNA"/>
</dbReference>
<dbReference type="PIR" id="F87606">
    <property type="entry name" value="F87606"/>
</dbReference>
<dbReference type="RefSeq" id="NP_421682.1">
    <property type="nucleotide sequence ID" value="NC_002696.2"/>
</dbReference>
<dbReference type="RefSeq" id="WP_010920726.1">
    <property type="nucleotide sequence ID" value="NC_002696.2"/>
</dbReference>
<dbReference type="SMR" id="Q9A4E8"/>
<dbReference type="STRING" id="190650.CC_2886"/>
<dbReference type="EnsemblBacteria" id="AAK24850">
    <property type="protein sequence ID" value="AAK24850"/>
    <property type="gene ID" value="CC_2886"/>
</dbReference>
<dbReference type="KEGG" id="ccr:CC_2886"/>
<dbReference type="PATRIC" id="fig|190650.5.peg.2890"/>
<dbReference type="eggNOG" id="COG3483">
    <property type="taxonomic scope" value="Bacteria"/>
</dbReference>
<dbReference type="HOGENOM" id="CLU_063240_0_0_5"/>
<dbReference type="BioCyc" id="CAULO:CC2886-MONOMER"/>
<dbReference type="UniPathway" id="UPA00333">
    <property type="reaction ID" value="UER00453"/>
</dbReference>
<dbReference type="Proteomes" id="UP000001816">
    <property type="component" value="Chromosome"/>
</dbReference>
<dbReference type="GO" id="GO:0020037">
    <property type="term" value="F:heme binding"/>
    <property type="evidence" value="ECO:0000250"/>
    <property type="project" value="UniProtKB"/>
</dbReference>
<dbReference type="GO" id="GO:0046872">
    <property type="term" value="F:metal ion binding"/>
    <property type="evidence" value="ECO:0007669"/>
    <property type="project" value="UniProtKB-KW"/>
</dbReference>
<dbReference type="GO" id="GO:0004833">
    <property type="term" value="F:tryptophan 2,3-dioxygenase activity"/>
    <property type="evidence" value="ECO:0000250"/>
    <property type="project" value="UniProtKB"/>
</dbReference>
<dbReference type="GO" id="GO:0019442">
    <property type="term" value="P:L-tryptophan catabolic process to acetyl-CoA"/>
    <property type="evidence" value="ECO:0007669"/>
    <property type="project" value="TreeGrafter"/>
</dbReference>
<dbReference type="GO" id="GO:0019441">
    <property type="term" value="P:L-tryptophan catabolic process to kynurenine"/>
    <property type="evidence" value="ECO:0000250"/>
    <property type="project" value="UniProtKB"/>
</dbReference>
<dbReference type="FunFam" id="1.20.58.480:FF:000001">
    <property type="entry name" value="Tryptophan 2,3-dioxygenase"/>
    <property type="match status" value="1"/>
</dbReference>
<dbReference type="Gene3D" id="1.20.58.480">
    <property type="match status" value="1"/>
</dbReference>
<dbReference type="HAMAP" id="MF_01972">
    <property type="entry name" value="T23O"/>
    <property type="match status" value="1"/>
</dbReference>
<dbReference type="InterPro" id="IPR037217">
    <property type="entry name" value="Trp/Indoleamine_2_3_dOase-like"/>
</dbReference>
<dbReference type="InterPro" id="IPR004981">
    <property type="entry name" value="Trp_2_3_dOase"/>
</dbReference>
<dbReference type="PANTHER" id="PTHR10138">
    <property type="entry name" value="TRYPTOPHAN 2,3-DIOXYGENASE"/>
    <property type="match status" value="1"/>
</dbReference>
<dbReference type="PANTHER" id="PTHR10138:SF0">
    <property type="entry name" value="TRYPTOPHAN 2,3-DIOXYGENASE"/>
    <property type="match status" value="1"/>
</dbReference>
<dbReference type="Pfam" id="PF03301">
    <property type="entry name" value="Trp_dioxygenase"/>
    <property type="match status" value="1"/>
</dbReference>
<dbReference type="SUPFAM" id="SSF140959">
    <property type="entry name" value="Indolic compounds 2,3-dioxygenase-like"/>
    <property type="match status" value="1"/>
</dbReference>
<keyword id="KW-0223">Dioxygenase</keyword>
<keyword id="KW-0349">Heme</keyword>
<keyword id="KW-0408">Iron</keyword>
<keyword id="KW-0479">Metal-binding</keyword>
<keyword id="KW-0560">Oxidoreductase</keyword>
<keyword id="KW-1185">Reference proteome</keyword>
<keyword id="KW-0823">Tryptophan catabolism</keyword>
<gene>
    <name evidence="1" type="primary">kynA</name>
    <name type="ordered locus">CC_2886</name>
</gene>
<feature type="chain" id="PRO_0000360113" description="Tryptophan 2,3-dioxygenase">
    <location>
        <begin position="1"/>
        <end position="263"/>
    </location>
</feature>
<feature type="binding site" evidence="1">
    <location>
        <begin position="32"/>
        <end position="36"/>
    </location>
    <ligand>
        <name>substrate</name>
    </ligand>
</feature>
<feature type="binding site" evidence="1">
    <location>
        <position position="94"/>
    </location>
    <ligand>
        <name>substrate</name>
    </ligand>
</feature>
<feature type="binding site" evidence="1">
    <location>
        <position position="98"/>
    </location>
    <ligand>
        <name>substrate</name>
    </ligand>
</feature>
<feature type="binding site" description="axial binding residue" evidence="1">
    <location>
        <position position="221"/>
    </location>
    <ligand>
        <name>heme</name>
        <dbReference type="ChEBI" id="CHEBI:30413"/>
    </ligand>
    <ligandPart>
        <name>Fe</name>
        <dbReference type="ChEBI" id="CHEBI:18248"/>
    </ligandPart>
</feature>
<feature type="binding site" evidence="1">
    <location>
        <position position="235"/>
    </location>
    <ligand>
        <name>substrate</name>
    </ligand>
</feature>
<protein>
    <recommendedName>
        <fullName evidence="1">Tryptophan 2,3-dioxygenase</fullName>
        <shortName evidence="1">TDO</shortName>
        <ecNumber evidence="1">1.13.11.11</ecNumber>
    </recommendedName>
    <alternativeName>
        <fullName evidence="1">Tryptamin 2,3-dioxygenase</fullName>
    </alternativeName>
    <alternativeName>
        <fullName evidence="1">Tryptophan oxygenase</fullName>
        <shortName evidence="1">TO</shortName>
        <shortName evidence="1">TRPO</shortName>
    </alternativeName>
    <alternativeName>
        <fullName evidence="1">Tryptophan pyrrolase</fullName>
    </alternativeName>
    <alternativeName>
        <fullName evidence="1">Tryptophanase</fullName>
    </alternativeName>
</protein>
<accession>Q9A4E8</accession>
<name>T23O_CAUVC</name>
<organism>
    <name type="scientific">Caulobacter vibrioides (strain ATCC 19089 / CIP 103742 / CB 15)</name>
    <name type="common">Caulobacter crescentus</name>
    <dbReference type="NCBI Taxonomy" id="190650"/>
    <lineage>
        <taxon>Bacteria</taxon>
        <taxon>Pseudomonadati</taxon>
        <taxon>Pseudomonadota</taxon>
        <taxon>Alphaproteobacteria</taxon>
        <taxon>Caulobacterales</taxon>
        <taxon>Caulobacteraceae</taxon>
        <taxon>Caulobacter</taxon>
    </lineage>
</organism>
<sequence>MAQDMTYARYLALDELLSAQKPLSDRHDELLFIVIHQTKELWLKEILHEVALALKLIAGGDVEPAYKALARVSRIQTVMTLSWDILATMTPADYLSFRDDLGTSSGFQSHQFRALEYLLGLKDQSFLKFHTERPEALAMLKSALESPSLYDVAIAQLPRHGLTVPDAALHRDFSQTYVPSPEVEAAWLEVYRDPKRYWELYQLAEKLVDLDDALVTWRHKHVLTVERIIGGRPGTGGTDGVGYLASTLRRRAFPELWSLRTKL</sequence>